<reference key="1">
    <citation type="journal article" date="2000" name="Proc. Natl. Acad. Sci. U.S.A.">
        <title>Genome sequence of Halobacterium species NRC-1.</title>
        <authorList>
            <person name="Ng W.V."/>
            <person name="Kennedy S.P."/>
            <person name="Mahairas G.G."/>
            <person name="Berquist B."/>
            <person name="Pan M."/>
            <person name="Shukla H.D."/>
            <person name="Lasky S.R."/>
            <person name="Baliga N.S."/>
            <person name="Thorsson V."/>
            <person name="Sbrogna J."/>
            <person name="Swartzell S."/>
            <person name="Weir D."/>
            <person name="Hall J."/>
            <person name="Dahl T.A."/>
            <person name="Welti R."/>
            <person name="Goo Y.A."/>
            <person name="Leithauser B."/>
            <person name="Keller K."/>
            <person name="Cruz R."/>
            <person name="Danson M.J."/>
            <person name="Hough D.W."/>
            <person name="Maddocks D.G."/>
            <person name="Jablonski P.E."/>
            <person name="Krebs M.P."/>
            <person name="Angevine C.M."/>
            <person name="Dale H."/>
            <person name="Isenbarger T.A."/>
            <person name="Peck R.F."/>
            <person name="Pohlschroder M."/>
            <person name="Spudich J.L."/>
            <person name="Jung K.-H."/>
            <person name="Alam M."/>
            <person name="Freitas T."/>
            <person name="Hou S."/>
            <person name="Daniels C.J."/>
            <person name="Dennis P.P."/>
            <person name="Omer A.D."/>
            <person name="Ebhardt H."/>
            <person name="Lowe T.M."/>
            <person name="Liang P."/>
            <person name="Riley M."/>
            <person name="Hood L."/>
            <person name="DasSarma S."/>
        </authorList>
    </citation>
    <scope>NUCLEOTIDE SEQUENCE [LARGE SCALE GENOMIC DNA]</scope>
    <source>
        <strain>ATCC 700922 / JCM 11081 / NRC-1</strain>
    </source>
</reference>
<gene>
    <name evidence="1" type="primary">aroD</name>
    <name type="ordered locus">VNG_0314G</name>
</gene>
<proteinExistence type="inferred from homology"/>
<dbReference type="EC" id="4.2.1.10" evidence="1"/>
<dbReference type="EMBL" id="AE004437">
    <property type="protein sequence ID" value="AAG18893.1"/>
    <property type="status" value="ALT_INIT"/>
    <property type="molecule type" value="Genomic_DNA"/>
</dbReference>
<dbReference type="PIR" id="A84191">
    <property type="entry name" value="A84191"/>
</dbReference>
<dbReference type="RefSeq" id="WP_012289139.1">
    <property type="nucleotide sequence ID" value="NC_002607.1"/>
</dbReference>
<dbReference type="SMR" id="Q9HSB4"/>
<dbReference type="FunCoup" id="Q9HSB4">
    <property type="interactions" value="51"/>
</dbReference>
<dbReference type="STRING" id="64091.VNG_0314G"/>
<dbReference type="PaxDb" id="64091-VNG_0314G"/>
<dbReference type="KEGG" id="hal:VNG_0314G"/>
<dbReference type="PATRIC" id="fig|64091.14.peg.232"/>
<dbReference type="HOGENOM" id="CLU_064444_1_0_2"/>
<dbReference type="InParanoid" id="Q9HSB4"/>
<dbReference type="OrthoDB" id="34329at2157"/>
<dbReference type="PhylomeDB" id="Q9HSB4"/>
<dbReference type="UniPathway" id="UPA00053">
    <property type="reaction ID" value="UER00086"/>
</dbReference>
<dbReference type="Proteomes" id="UP000000554">
    <property type="component" value="Chromosome"/>
</dbReference>
<dbReference type="GO" id="GO:0003855">
    <property type="term" value="F:3-dehydroquinate dehydratase activity"/>
    <property type="evidence" value="ECO:0000318"/>
    <property type="project" value="GO_Central"/>
</dbReference>
<dbReference type="GO" id="GO:0046279">
    <property type="term" value="P:3,4-dihydroxybenzoate biosynthetic process"/>
    <property type="evidence" value="ECO:0000318"/>
    <property type="project" value="GO_Central"/>
</dbReference>
<dbReference type="GO" id="GO:0008652">
    <property type="term" value="P:amino acid biosynthetic process"/>
    <property type="evidence" value="ECO:0007669"/>
    <property type="project" value="UniProtKB-KW"/>
</dbReference>
<dbReference type="GO" id="GO:0009073">
    <property type="term" value="P:aromatic amino acid family biosynthetic process"/>
    <property type="evidence" value="ECO:0007669"/>
    <property type="project" value="UniProtKB-KW"/>
</dbReference>
<dbReference type="GO" id="GO:0009423">
    <property type="term" value="P:chorismate biosynthetic process"/>
    <property type="evidence" value="ECO:0007669"/>
    <property type="project" value="UniProtKB-UniRule"/>
</dbReference>
<dbReference type="CDD" id="cd00502">
    <property type="entry name" value="DHQase_I"/>
    <property type="match status" value="1"/>
</dbReference>
<dbReference type="Gene3D" id="3.20.20.70">
    <property type="entry name" value="Aldolase class I"/>
    <property type="match status" value="1"/>
</dbReference>
<dbReference type="HAMAP" id="MF_00214">
    <property type="entry name" value="AroD"/>
    <property type="match status" value="1"/>
</dbReference>
<dbReference type="InterPro" id="IPR013785">
    <property type="entry name" value="Aldolase_TIM"/>
</dbReference>
<dbReference type="InterPro" id="IPR001381">
    <property type="entry name" value="DHquinase_I"/>
</dbReference>
<dbReference type="InterPro" id="IPR050146">
    <property type="entry name" value="Type-I_3-dehydroquinase"/>
</dbReference>
<dbReference type="PANTHER" id="PTHR43699">
    <property type="entry name" value="3-DEHYDROQUINATE DEHYDRATASE"/>
    <property type="match status" value="1"/>
</dbReference>
<dbReference type="PANTHER" id="PTHR43699:SF1">
    <property type="entry name" value="3-DEHYDROQUINATE DEHYDRATASE"/>
    <property type="match status" value="1"/>
</dbReference>
<dbReference type="Pfam" id="PF01487">
    <property type="entry name" value="DHquinase_I"/>
    <property type="match status" value="1"/>
</dbReference>
<dbReference type="SUPFAM" id="SSF51569">
    <property type="entry name" value="Aldolase"/>
    <property type="match status" value="1"/>
</dbReference>
<name>AROD_HALSA</name>
<sequence length="226" mass="23048">MEFQDFLLAASTGDLGAAPAAPEHVDLVEFRMDLAADPLAALDDYDGVLPVLATNRADWEGGAAADGGDRIDALAEAARTDCVAAVDIERSALVDDDTADGAEALAAARSTDTTTVVSAHDFDGTPSLSAMADLLGEACSLGDVGKLAVTPQDRGDALDVIRVTHEYSAAGMTVATMGMGDLGRHTRAVTPLYGSKLGYAPVADGETTAPGQYAPAALQALIADLQ</sequence>
<comment type="function">
    <text evidence="1">Involved in the third step of the chorismate pathway, which leads to the biosynthesis of aromatic amino acids. Catalyzes the cis-dehydration of 3-dehydroquinate (DHQ) and introduces the first double bond of the aromatic ring to yield 3-dehydroshikimate.</text>
</comment>
<comment type="catalytic activity">
    <reaction evidence="1">
        <text>3-dehydroquinate = 3-dehydroshikimate + H2O</text>
        <dbReference type="Rhea" id="RHEA:21096"/>
        <dbReference type="ChEBI" id="CHEBI:15377"/>
        <dbReference type="ChEBI" id="CHEBI:16630"/>
        <dbReference type="ChEBI" id="CHEBI:32364"/>
        <dbReference type="EC" id="4.2.1.10"/>
    </reaction>
</comment>
<comment type="pathway">
    <text evidence="1">Metabolic intermediate biosynthesis; chorismate biosynthesis; chorismate from D-erythrose 4-phosphate and phosphoenolpyruvate: step 3/7.</text>
</comment>
<comment type="subunit">
    <text evidence="1">Homodimer.</text>
</comment>
<comment type="similarity">
    <text evidence="1">Belongs to the type-I 3-dehydroquinase family.</text>
</comment>
<comment type="sequence caution" evidence="2">
    <conflict type="erroneous initiation">
        <sequence resource="EMBL-CDS" id="AAG18893"/>
    </conflict>
    <text>Truncated N-terminus.</text>
</comment>
<organism>
    <name type="scientific">Halobacterium salinarum (strain ATCC 700922 / JCM 11081 / NRC-1)</name>
    <name type="common">Halobacterium halobium</name>
    <dbReference type="NCBI Taxonomy" id="64091"/>
    <lineage>
        <taxon>Archaea</taxon>
        <taxon>Methanobacteriati</taxon>
        <taxon>Methanobacteriota</taxon>
        <taxon>Stenosarchaea group</taxon>
        <taxon>Halobacteria</taxon>
        <taxon>Halobacteriales</taxon>
        <taxon>Halobacteriaceae</taxon>
        <taxon>Halobacterium</taxon>
        <taxon>Halobacterium salinarum NRC-34001</taxon>
    </lineage>
</organism>
<keyword id="KW-0028">Amino-acid biosynthesis</keyword>
<keyword id="KW-0057">Aromatic amino acid biosynthesis</keyword>
<keyword id="KW-0456">Lyase</keyword>
<keyword id="KW-1185">Reference proteome</keyword>
<keyword id="KW-0704">Schiff base</keyword>
<feature type="chain" id="PRO_0000138827" description="3-dehydroquinate dehydratase">
    <location>
        <begin position="1"/>
        <end position="226"/>
    </location>
</feature>
<feature type="active site" description="Proton donor/acceptor" evidence="1">
    <location>
        <position position="120"/>
    </location>
</feature>
<feature type="active site" description="Schiff-base intermediate with substrate" evidence="1">
    <location>
        <position position="146"/>
    </location>
</feature>
<feature type="binding site" evidence="1">
    <location>
        <begin position="29"/>
        <end position="31"/>
    </location>
    <ligand>
        <name>3-dehydroquinate</name>
        <dbReference type="ChEBI" id="CHEBI:32364"/>
    </ligand>
</feature>
<feature type="binding site" evidence="1">
    <location>
        <position position="56"/>
    </location>
    <ligand>
        <name>3-dehydroquinate</name>
        <dbReference type="ChEBI" id="CHEBI:32364"/>
    </ligand>
</feature>
<feature type="binding site" evidence="1">
    <location>
        <position position="187"/>
    </location>
    <ligand>
        <name>3-dehydroquinate</name>
        <dbReference type="ChEBI" id="CHEBI:32364"/>
    </ligand>
</feature>
<feature type="binding site" evidence="1">
    <location>
        <position position="208"/>
    </location>
    <ligand>
        <name>3-dehydroquinate</name>
        <dbReference type="ChEBI" id="CHEBI:32364"/>
    </ligand>
</feature>
<feature type="binding site" evidence="1">
    <location>
        <position position="212"/>
    </location>
    <ligand>
        <name>3-dehydroquinate</name>
        <dbReference type="ChEBI" id="CHEBI:32364"/>
    </ligand>
</feature>
<accession>Q9HSB4</accession>
<protein>
    <recommendedName>
        <fullName evidence="1">3-dehydroquinate dehydratase</fullName>
        <shortName evidence="1">3-dehydroquinase</shortName>
        <ecNumber evidence="1">4.2.1.10</ecNumber>
    </recommendedName>
    <alternativeName>
        <fullName evidence="1">Type I DHQase</fullName>
    </alternativeName>
    <alternativeName>
        <fullName evidence="1">Type I dehydroquinase</fullName>
        <shortName evidence="1">DHQ1</shortName>
    </alternativeName>
</protein>
<evidence type="ECO:0000255" key="1">
    <source>
        <dbReference type="HAMAP-Rule" id="MF_00214"/>
    </source>
</evidence>
<evidence type="ECO:0000305" key="2"/>